<protein>
    <recommendedName>
        <fullName evidence="1">3-isopropylmalate dehydratase small subunit</fullName>
        <ecNumber evidence="1">4.2.1.33</ecNumber>
    </recommendedName>
    <alternativeName>
        <fullName evidence="1">Alpha-IPM isomerase</fullName>
        <shortName evidence="1">IPMI</shortName>
    </alternativeName>
    <alternativeName>
        <fullName evidence="1">Isopropylmalate isomerase</fullName>
    </alternativeName>
</protein>
<feature type="chain" id="PRO_0000141816" description="3-isopropylmalate dehydratase small subunit">
    <location>
        <begin position="1"/>
        <end position="198"/>
    </location>
</feature>
<organism>
    <name type="scientific">Corynebacterium jeikeium (strain K411)</name>
    <dbReference type="NCBI Taxonomy" id="306537"/>
    <lineage>
        <taxon>Bacteria</taxon>
        <taxon>Bacillati</taxon>
        <taxon>Actinomycetota</taxon>
        <taxon>Actinomycetes</taxon>
        <taxon>Mycobacteriales</taxon>
        <taxon>Corynebacteriaceae</taxon>
        <taxon>Corynebacterium</taxon>
    </lineage>
</organism>
<name>LEUD_CORJK</name>
<keyword id="KW-0028">Amino-acid biosynthesis</keyword>
<keyword id="KW-0100">Branched-chain amino acid biosynthesis</keyword>
<keyword id="KW-0432">Leucine biosynthesis</keyword>
<keyword id="KW-0456">Lyase</keyword>
<keyword id="KW-1185">Reference proteome</keyword>
<proteinExistence type="inferred from homology"/>
<evidence type="ECO:0000255" key="1">
    <source>
        <dbReference type="HAMAP-Rule" id="MF_01031"/>
    </source>
</evidence>
<evidence type="ECO:0000305" key="2"/>
<sequence>MEKFNTHTGVAAPLNRSNVDTDQIIPAVYLKRVTRTGFEDGLFAGWRKDPEFILNQEPYKNASVLVAGPDFGTGSSREHAVWALMDYGFRVVLSSRFADIFRGNSGKAGLLAAQMEQSDIELIWKLLEQQPGAEITVNLEDRTVTLGTHTFGFDVDDYTRWRLMEGLDDIGLTLRNEEAIEAFESQRASFKPRTIPAS</sequence>
<comment type="function">
    <text evidence="1">Catalyzes the isomerization between 2-isopropylmalate and 3-isopropylmalate, via the formation of 2-isopropylmaleate.</text>
</comment>
<comment type="catalytic activity">
    <reaction evidence="1">
        <text>(2R,3S)-3-isopropylmalate = (2S)-2-isopropylmalate</text>
        <dbReference type="Rhea" id="RHEA:32287"/>
        <dbReference type="ChEBI" id="CHEBI:1178"/>
        <dbReference type="ChEBI" id="CHEBI:35121"/>
        <dbReference type="EC" id="4.2.1.33"/>
    </reaction>
</comment>
<comment type="pathway">
    <text evidence="1">Amino-acid biosynthesis; L-leucine biosynthesis; L-leucine from 3-methyl-2-oxobutanoate: step 2/4.</text>
</comment>
<comment type="subunit">
    <text evidence="1">Heterodimer of LeuC and LeuD.</text>
</comment>
<comment type="similarity">
    <text evidence="1">Belongs to the LeuD family. LeuD type 1 subfamily.</text>
</comment>
<comment type="sequence caution" evidence="2">
    <conflict type="erroneous initiation">
        <sequence resource="EMBL-CDS" id="CAI37384"/>
    </conflict>
</comment>
<accession>Q4JUX3</accession>
<reference key="1">
    <citation type="journal article" date="2005" name="J. Bacteriol.">
        <title>Complete genome sequence and analysis of the multiresistant nosocomial pathogen Corynebacterium jeikeium K411, a lipid-requiring bacterium of the human skin flora.</title>
        <authorList>
            <person name="Tauch A."/>
            <person name="Kaiser O."/>
            <person name="Hain T."/>
            <person name="Goesmann A."/>
            <person name="Weisshaar B."/>
            <person name="Albersmeier A."/>
            <person name="Bekel T."/>
            <person name="Bischoff N."/>
            <person name="Brune I."/>
            <person name="Chakraborty T."/>
            <person name="Kalinowski J."/>
            <person name="Meyer F."/>
            <person name="Rupp O."/>
            <person name="Schneiker S."/>
            <person name="Viehoever P."/>
            <person name="Puehler A."/>
        </authorList>
    </citation>
    <scope>NUCLEOTIDE SEQUENCE [LARGE SCALE GENOMIC DNA]</scope>
    <source>
        <strain>K411</strain>
    </source>
</reference>
<gene>
    <name evidence="1" type="primary">leuD</name>
    <name type="ordered locus">jk1220</name>
</gene>
<dbReference type="EC" id="4.2.1.33" evidence="1"/>
<dbReference type="EMBL" id="CR931997">
    <property type="protein sequence ID" value="CAI37384.1"/>
    <property type="status" value="ALT_INIT"/>
    <property type="molecule type" value="Genomic_DNA"/>
</dbReference>
<dbReference type="RefSeq" id="WP_011273736.1">
    <property type="nucleotide sequence ID" value="NC_007164.1"/>
</dbReference>
<dbReference type="SMR" id="Q4JUX3"/>
<dbReference type="STRING" id="306537.jk1220"/>
<dbReference type="GeneID" id="92738738"/>
<dbReference type="KEGG" id="cjk:jk1220"/>
<dbReference type="PATRIC" id="fig|306537.10.peg.1235"/>
<dbReference type="eggNOG" id="COG0066">
    <property type="taxonomic scope" value="Bacteria"/>
</dbReference>
<dbReference type="HOGENOM" id="CLU_081378_0_1_11"/>
<dbReference type="OrthoDB" id="9777465at2"/>
<dbReference type="UniPathway" id="UPA00048">
    <property type="reaction ID" value="UER00071"/>
</dbReference>
<dbReference type="Proteomes" id="UP000000545">
    <property type="component" value="Chromosome"/>
</dbReference>
<dbReference type="GO" id="GO:0009316">
    <property type="term" value="C:3-isopropylmalate dehydratase complex"/>
    <property type="evidence" value="ECO:0007669"/>
    <property type="project" value="InterPro"/>
</dbReference>
<dbReference type="GO" id="GO:0003861">
    <property type="term" value="F:3-isopropylmalate dehydratase activity"/>
    <property type="evidence" value="ECO:0007669"/>
    <property type="project" value="UniProtKB-UniRule"/>
</dbReference>
<dbReference type="GO" id="GO:0009098">
    <property type="term" value="P:L-leucine biosynthetic process"/>
    <property type="evidence" value="ECO:0007669"/>
    <property type="project" value="UniProtKB-UniRule"/>
</dbReference>
<dbReference type="CDD" id="cd01577">
    <property type="entry name" value="IPMI_Swivel"/>
    <property type="match status" value="1"/>
</dbReference>
<dbReference type="FunFam" id="3.20.19.10:FF:000003">
    <property type="entry name" value="3-isopropylmalate dehydratase small subunit"/>
    <property type="match status" value="1"/>
</dbReference>
<dbReference type="Gene3D" id="3.20.19.10">
    <property type="entry name" value="Aconitase, domain 4"/>
    <property type="match status" value="1"/>
</dbReference>
<dbReference type="HAMAP" id="MF_01031">
    <property type="entry name" value="LeuD_type1"/>
    <property type="match status" value="1"/>
</dbReference>
<dbReference type="InterPro" id="IPR004431">
    <property type="entry name" value="3-IsopropMal_deHydase_ssu"/>
</dbReference>
<dbReference type="InterPro" id="IPR015928">
    <property type="entry name" value="Aconitase/3IPM_dehydase_swvl"/>
</dbReference>
<dbReference type="InterPro" id="IPR000573">
    <property type="entry name" value="AconitaseA/IPMdHydase_ssu_swvl"/>
</dbReference>
<dbReference type="InterPro" id="IPR033940">
    <property type="entry name" value="IPMI_Swivel"/>
</dbReference>
<dbReference type="InterPro" id="IPR050075">
    <property type="entry name" value="LeuD"/>
</dbReference>
<dbReference type="NCBIfam" id="TIGR00171">
    <property type="entry name" value="leuD"/>
    <property type="match status" value="1"/>
</dbReference>
<dbReference type="NCBIfam" id="NF002458">
    <property type="entry name" value="PRK01641.1"/>
    <property type="match status" value="1"/>
</dbReference>
<dbReference type="PANTHER" id="PTHR43345:SF5">
    <property type="entry name" value="3-ISOPROPYLMALATE DEHYDRATASE SMALL SUBUNIT"/>
    <property type="match status" value="1"/>
</dbReference>
<dbReference type="PANTHER" id="PTHR43345">
    <property type="entry name" value="3-ISOPROPYLMALATE DEHYDRATASE SMALL SUBUNIT 2-RELATED-RELATED"/>
    <property type="match status" value="1"/>
</dbReference>
<dbReference type="Pfam" id="PF00694">
    <property type="entry name" value="Aconitase_C"/>
    <property type="match status" value="1"/>
</dbReference>
<dbReference type="SUPFAM" id="SSF52016">
    <property type="entry name" value="LeuD/IlvD-like"/>
    <property type="match status" value="1"/>
</dbReference>